<comment type="function">
    <text evidence="1">May help in the organization of the PsaE and PsaF subunits.</text>
</comment>
<comment type="subcellular location">
    <subcellularLocation>
        <location evidence="1">Plastid</location>
        <location evidence="1">Chloroplast thylakoid membrane</location>
        <topology evidence="1">Single-pass membrane protein</topology>
    </subcellularLocation>
</comment>
<comment type="similarity">
    <text evidence="1">Belongs to the PsaJ family.</text>
</comment>
<organism>
    <name type="scientific">Trieres chinensis</name>
    <name type="common">Marine centric diatom</name>
    <name type="synonym">Odontella sinensis</name>
    <dbReference type="NCBI Taxonomy" id="1514140"/>
    <lineage>
        <taxon>Eukaryota</taxon>
        <taxon>Sar</taxon>
        <taxon>Stramenopiles</taxon>
        <taxon>Ochrophyta</taxon>
        <taxon>Bacillariophyta</taxon>
        <taxon>Mediophyceae</taxon>
        <taxon>Biddulphiophycidae</taxon>
        <taxon>Eupodiscales</taxon>
        <taxon>Parodontellaceae</taxon>
        <taxon>Trieres</taxon>
    </lineage>
</organism>
<protein>
    <recommendedName>
        <fullName evidence="1">Photosystem I reaction center subunit IX</fullName>
    </recommendedName>
    <alternativeName>
        <fullName evidence="1">PSI-J</fullName>
    </alternativeName>
</protein>
<geneLocation type="chloroplast"/>
<accession>P49485</accession>
<proteinExistence type="inferred from homology"/>
<reference key="1">
    <citation type="journal article" date="1995" name="Plant Mol. Biol. Rep.">
        <title>The chloroplast genome of a chlorophyll a+c-containing alga, Odontella sinensis.</title>
        <authorList>
            <person name="Kowallik K.V."/>
            <person name="Stoebe B."/>
            <person name="Schaffran I."/>
            <person name="Kroth-Pancic P."/>
            <person name="Freier U."/>
        </authorList>
    </citation>
    <scope>NUCLEOTIDE SEQUENCE [LARGE SCALE GENOMIC DNA]</scope>
</reference>
<dbReference type="EMBL" id="Z67753">
    <property type="protein sequence ID" value="CAA91701.1"/>
    <property type="molecule type" value="Genomic_DNA"/>
</dbReference>
<dbReference type="PIR" id="S78328">
    <property type="entry name" value="S78328"/>
</dbReference>
<dbReference type="RefSeq" id="NP_043669.1">
    <property type="nucleotide sequence ID" value="NC_001713.1"/>
</dbReference>
<dbReference type="SMR" id="P49485"/>
<dbReference type="GeneID" id="801809"/>
<dbReference type="GO" id="GO:0009535">
    <property type="term" value="C:chloroplast thylakoid membrane"/>
    <property type="evidence" value="ECO:0007669"/>
    <property type="project" value="UniProtKB-SubCell"/>
</dbReference>
<dbReference type="GO" id="GO:0009522">
    <property type="term" value="C:photosystem I"/>
    <property type="evidence" value="ECO:0007669"/>
    <property type="project" value="UniProtKB-KW"/>
</dbReference>
<dbReference type="GO" id="GO:0015979">
    <property type="term" value="P:photosynthesis"/>
    <property type="evidence" value="ECO:0007669"/>
    <property type="project" value="UniProtKB-UniRule"/>
</dbReference>
<dbReference type="Gene3D" id="1.20.5.510">
    <property type="entry name" value="Single helix bin"/>
    <property type="match status" value="1"/>
</dbReference>
<dbReference type="HAMAP" id="MF_00522">
    <property type="entry name" value="PSI_PsaJ"/>
    <property type="match status" value="1"/>
</dbReference>
<dbReference type="InterPro" id="IPR002615">
    <property type="entry name" value="PSI_PsaJ"/>
</dbReference>
<dbReference type="InterPro" id="IPR036062">
    <property type="entry name" value="PSI_PsaJ_sf"/>
</dbReference>
<dbReference type="PANTHER" id="PTHR36082">
    <property type="match status" value="1"/>
</dbReference>
<dbReference type="PANTHER" id="PTHR36082:SF2">
    <property type="entry name" value="PHOTOSYSTEM I REACTION CENTER SUBUNIT IX"/>
    <property type="match status" value="1"/>
</dbReference>
<dbReference type="Pfam" id="PF01701">
    <property type="entry name" value="PSI_PsaJ"/>
    <property type="match status" value="1"/>
</dbReference>
<dbReference type="SUPFAM" id="SSF81544">
    <property type="entry name" value="Subunit IX of photosystem I reaction centre, PsaJ"/>
    <property type="match status" value="1"/>
</dbReference>
<sequence>MNDLQKYLSTAPVLLTLWMTFTAGFIIEINRFFPDMLGLYF</sequence>
<evidence type="ECO:0000255" key="1">
    <source>
        <dbReference type="HAMAP-Rule" id="MF_00522"/>
    </source>
</evidence>
<keyword id="KW-0150">Chloroplast</keyword>
<keyword id="KW-0472">Membrane</keyword>
<keyword id="KW-0602">Photosynthesis</keyword>
<keyword id="KW-0603">Photosystem I</keyword>
<keyword id="KW-0934">Plastid</keyword>
<keyword id="KW-0793">Thylakoid</keyword>
<keyword id="KW-0812">Transmembrane</keyword>
<keyword id="KW-1133">Transmembrane helix</keyword>
<name>PSAJ_TRICV</name>
<feature type="chain" id="PRO_0000207800" description="Photosystem I reaction center subunit IX">
    <location>
        <begin position="1"/>
        <end position="41"/>
    </location>
</feature>
<feature type="transmembrane region" description="Helical" evidence="1">
    <location>
        <begin position="7"/>
        <end position="27"/>
    </location>
</feature>
<gene>
    <name evidence="1" type="primary">psaJ</name>
</gene>